<dbReference type="EMBL" id="X00716">
    <property type="protein sequence ID" value="CAA25308.1"/>
    <property type="molecule type" value="mRNA"/>
</dbReference>
<dbReference type="PIR" id="A02911">
    <property type="entry name" value="CYFGA2"/>
</dbReference>
<dbReference type="SMR" id="P02508"/>
<dbReference type="GlyCosmos" id="P02508">
    <property type="glycosylation" value="1 site, No reported glycans"/>
</dbReference>
<dbReference type="GO" id="GO:0005737">
    <property type="term" value="C:cytoplasm"/>
    <property type="evidence" value="ECO:0007669"/>
    <property type="project" value="UniProtKB-SubCell"/>
</dbReference>
<dbReference type="GO" id="GO:0005634">
    <property type="term" value="C:nucleus"/>
    <property type="evidence" value="ECO:0007669"/>
    <property type="project" value="UniProtKB-SubCell"/>
</dbReference>
<dbReference type="GO" id="GO:0046872">
    <property type="term" value="F:metal ion binding"/>
    <property type="evidence" value="ECO:0007669"/>
    <property type="project" value="UniProtKB-KW"/>
</dbReference>
<dbReference type="GO" id="GO:0005212">
    <property type="term" value="F:structural constituent of eye lens"/>
    <property type="evidence" value="ECO:0007669"/>
    <property type="project" value="UniProtKB-KW"/>
</dbReference>
<dbReference type="GO" id="GO:0051082">
    <property type="term" value="F:unfolded protein binding"/>
    <property type="evidence" value="ECO:0007669"/>
    <property type="project" value="TreeGrafter"/>
</dbReference>
<dbReference type="GO" id="GO:0002088">
    <property type="term" value="P:lens development in camera-type eye"/>
    <property type="evidence" value="ECO:0007669"/>
    <property type="project" value="TreeGrafter"/>
</dbReference>
<dbReference type="GO" id="GO:0043066">
    <property type="term" value="P:negative regulation of apoptotic process"/>
    <property type="evidence" value="ECO:0007669"/>
    <property type="project" value="TreeGrafter"/>
</dbReference>
<dbReference type="GO" id="GO:0042026">
    <property type="term" value="P:protein refolding"/>
    <property type="evidence" value="ECO:0007669"/>
    <property type="project" value="TreeGrafter"/>
</dbReference>
<dbReference type="GO" id="GO:0009408">
    <property type="term" value="P:response to heat"/>
    <property type="evidence" value="ECO:0007669"/>
    <property type="project" value="TreeGrafter"/>
</dbReference>
<dbReference type="FunFam" id="2.60.40.790:FF:000008">
    <property type="entry name" value="Alpha-crystallin A chain"/>
    <property type="match status" value="1"/>
</dbReference>
<dbReference type="Gene3D" id="2.60.40.790">
    <property type="match status" value="1"/>
</dbReference>
<dbReference type="InterPro" id="IPR002068">
    <property type="entry name" value="A-crystallin/Hsp20_dom"/>
</dbReference>
<dbReference type="InterPro" id="IPR001436">
    <property type="entry name" value="Alpha-crystallin/sHSP_animal"/>
</dbReference>
<dbReference type="InterPro" id="IPR003090">
    <property type="entry name" value="Alpha-crystallin_N"/>
</dbReference>
<dbReference type="InterPro" id="IPR008978">
    <property type="entry name" value="HSP20-like_chaperone"/>
</dbReference>
<dbReference type="PANTHER" id="PTHR45640:SF14">
    <property type="entry name" value="ALPHA-CRYSTALLIN A CHAIN"/>
    <property type="match status" value="1"/>
</dbReference>
<dbReference type="PANTHER" id="PTHR45640">
    <property type="entry name" value="HEAT SHOCK PROTEIN HSP-12.2-RELATED"/>
    <property type="match status" value="1"/>
</dbReference>
<dbReference type="Pfam" id="PF00525">
    <property type="entry name" value="Crystallin"/>
    <property type="match status" value="1"/>
</dbReference>
<dbReference type="Pfam" id="PF00011">
    <property type="entry name" value="HSP20"/>
    <property type="match status" value="1"/>
</dbReference>
<dbReference type="PRINTS" id="PR00299">
    <property type="entry name" value="ACRYSTALLIN"/>
</dbReference>
<dbReference type="SUPFAM" id="SSF49764">
    <property type="entry name" value="HSP20-like chaperones"/>
    <property type="match status" value="1"/>
</dbReference>
<dbReference type="PROSITE" id="PS01031">
    <property type="entry name" value="SHSP"/>
    <property type="match status" value="1"/>
</dbReference>
<protein>
    <recommendedName>
        <fullName>Alpha-crystallin A chain</fullName>
    </recommendedName>
</protein>
<evidence type="ECO:0000250" key="1"/>
<evidence type="ECO:0000250" key="2">
    <source>
        <dbReference type="UniProtKB" id="P02470"/>
    </source>
</evidence>
<evidence type="ECO:0000250" key="3">
    <source>
        <dbReference type="UniProtKB" id="P02489"/>
    </source>
</evidence>
<evidence type="ECO:0000255" key="4">
    <source>
        <dbReference type="PROSITE-ProRule" id="PRU00285"/>
    </source>
</evidence>
<evidence type="ECO:0000256" key="5">
    <source>
        <dbReference type="SAM" id="MobiDB-lite"/>
    </source>
</evidence>
<organism>
    <name type="scientific">Rana temporaria</name>
    <name type="common">European common frog</name>
    <dbReference type="NCBI Taxonomy" id="8407"/>
    <lineage>
        <taxon>Eukaryota</taxon>
        <taxon>Metazoa</taxon>
        <taxon>Chordata</taxon>
        <taxon>Craniata</taxon>
        <taxon>Vertebrata</taxon>
        <taxon>Euteleostomi</taxon>
        <taxon>Amphibia</taxon>
        <taxon>Batrachia</taxon>
        <taxon>Anura</taxon>
        <taxon>Neobatrachia</taxon>
        <taxon>Ranoidea</taxon>
        <taxon>Ranidae</taxon>
        <taxon>Rana</taxon>
        <taxon>Rana</taxon>
    </lineage>
</organism>
<sequence length="149" mass="16949">QVFGEGMFDYDLFPFLTSTVSPHYRHGLLRGFMDSGISEVRSDRDRFTINLDVKHFSPDDLTVKILDDFVEIHGKHSERQDDHGYISREFHRRYRLPSNLDQSSISCSLSADGILTFSGPKMMSNLVSSHSERPIPVSREEKPTSAPSS</sequence>
<proteinExistence type="evidence at transcript level"/>
<gene>
    <name type="primary">CRYAA</name>
</gene>
<feature type="chain" id="PRO_0000125902" description="Alpha-crystallin A chain">
    <location>
        <begin position="1" status="less than"/>
        <end position="149"/>
    </location>
</feature>
<feature type="domain" description="sHSP" evidence="4">
    <location>
        <begin position="28"/>
        <end position="138"/>
    </location>
</feature>
<feature type="region of interest" description="Disordered" evidence="5">
    <location>
        <begin position="125"/>
        <end position="149"/>
    </location>
</feature>
<feature type="compositionally biased region" description="Basic and acidic residues" evidence="5">
    <location>
        <begin position="130"/>
        <end position="143"/>
    </location>
</feature>
<feature type="binding site" evidence="1">
    <location>
        <position position="55"/>
    </location>
    <ligand>
        <name>Zn(2+)</name>
        <dbReference type="ChEBI" id="CHEBI:29105"/>
        <label>1</label>
    </ligand>
</feature>
<feature type="binding site" evidence="2">
    <location>
        <position position="76"/>
    </location>
    <ligand>
        <name>Zn(2+)</name>
        <dbReference type="ChEBI" id="CHEBI:29105"/>
        <label>1</label>
    </ligand>
</feature>
<feature type="binding site" evidence="1">
    <location>
        <position position="76"/>
    </location>
    <ligand>
        <name>Zn(2+)</name>
        <dbReference type="ChEBI" id="CHEBI:29105"/>
        <label>2</label>
    </ligand>
</feature>
<feature type="binding site" evidence="2">
    <location>
        <position position="78"/>
    </location>
    <ligand>
        <name>Zn(2+)</name>
        <dbReference type="ChEBI" id="CHEBI:29105"/>
        <label>1</label>
    </ligand>
</feature>
<feature type="binding site" evidence="1">
    <location>
        <position position="78"/>
    </location>
    <ligand>
        <name>Zn(2+)</name>
        <dbReference type="ChEBI" id="CHEBI:29105"/>
        <label>2</label>
    </ligand>
</feature>
<feature type="binding site" evidence="1">
    <location>
        <position position="83"/>
    </location>
    <ligand>
        <name>Zn(2+)</name>
        <dbReference type="ChEBI" id="CHEBI:29105"/>
        <label>1</label>
    </ligand>
</feature>
<feature type="binding site" evidence="2">
    <location>
        <position position="83"/>
    </location>
    <ligand>
        <name>Zn(2+)</name>
        <dbReference type="ChEBI" id="CHEBI:29105"/>
        <label>2</label>
    </ligand>
</feature>
<feature type="binding site" evidence="1">
    <location>
        <position position="91"/>
    </location>
    <ligand>
        <name>Zn(2+)</name>
        <dbReference type="ChEBI" id="CHEBI:29105"/>
        <label>1</label>
    </ligand>
</feature>
<feature type="binding site" evidence="2">
    <location>
        <position position="130"/>
    </location>
    <ligand>
        <name>Zn(2+)</name>
        <dbReference type="ChEBI" id="CHEBI:29105"/>
        <label>3</label>
    </ligand>
</feature>
<feature type="glycosylation site" description="O-linked (GlcNAc) serine" evidence="1">
    <location>
        <position position="138"/>
    </location>
</feature>
<feature type="non-terminal residue">
    <location>
        <position position="1"/>
    </location>
</feature>
<keyword id="KW-0963">Cytoplasm</keyword>
<keyword id="KW-0273">Eye lens protein</keyword>
<keyword id="KW-0325">Glycoprotein</keyword>
<keyword id="KW-0479">Metal-binding</keyword>
<keyword id="KW-0539">Nucleus</keyword>
<keyword id="KW-0862">Zinc</keyword>
<comment type="function">
    <text evidence="3">Contributes to the transparency and refractive index of the lens. May act as a chaperone, preventing aggregation of various proteins under a wide range of stress conditions.</text>
</comment>
<comment type="subunit">
    <text evidence="2 3">Heteropolymer composed of three CRYAA and one CRYAB subunits (By similarity). Inter-subunit bridging via zinc ions enhances stability, which is crucial as there is no protein turn over in the lens. Can also form homodimers and homotetramers (dimers of dimers) which serve as the building blocks of homooligomers (By similarity). Within homooligomers, the zinc-binding motif is created from residues of 3 different molecules. His-76 and Glu-78 from one molecule are ligands of the zinc ion, and His-83 and His-130 residues from additional molecules complete the site with tetrahedral coordination geometry (By similarity).</text>
</comment>
<comment type="subcellular location">
    <subcellularLocation>
        <location evidence="3">Cytoplasm</location>
    </subcellularLocation>
    <subcellularLocation>
        <location evidence="3">Nucleus</location>
    </subcellularLocation>
    <text evidence="3">Translocates to the nucleus during heat shock.</text>
</comment>
<comment type="similarity">
    <text evidence="4">Belongs to the small heat shock protein (HSP20) family.</text>
</comment>
<name>CRYAA_RANTE</name>
<reference key="1">
    <citation type="journal article" date="1983" name="FEBS Lett.">
        <title>The absence of the long 3'-non-translated region in mRNA coding for eye lens alpha A2-crystallin of the frog (Rana temporaria).</title>
        <authorList>
            <person name="Tomarev S.I."/>
            <person name="Zinovieva R.D."/>
            <person name="Dolgilevich S.M."/>
            <person name="Krayev A.S."/>
            <person name="Skryabin K.G."/>
            <person name="Gause G.G. Jr."/>
        </authorList>
    </citation>
    <scope>NUCLEOTIDE SEQUENCE [MRNA]</scope>
</reference>
<accession>P02508</accession>